<organism>
    <name type="scientific">Salmonella dublin (strain CT_02021853)</name>
    <dbReference type="NCBI Taxonomy" id="439851"/>
    <lineage>
        <taxon>Bacteria</taxon>
        <taxon>Pseudomonadati</taxon>
        <taxon>Pseudomonadota</taxon>
        <taxon>Gammaproteobacteria</taxon>
        <taxon>Enterobacterales</taxon>
        <taxon>Enterobacteriaceae</taxon>
        <taxon>Salmonella</taxon>
    </lineage>
</organism>
<gene>
    <name evidence="1" type="primary">napA</name>
    <name type="ordered locus">SeD_A2602</name>
</gene>
<accession>B5FNQ2</accession>
<reference key="1">
    <citation type="journal article" date="2011" name="J. Bacteriol.">
        <title>Comparative genomics of 28 Salmonella enterica isolates: evidence for CRISPR-mediated adaptive sublineage evolution.</title>
        <authorList>
            <person name="Fricke W.F."/>
            <person name="Mammel M.K."/>
            <person name="McDermott P.F."/>
            <person name="Tartera C."/>
            <person name="White D.G."/>
            <person name="Leclerc J.E."/>
            <person name="Ravel J."/>
            <person name="Cebula T.A."/>
        </authorList>
    </citation>
    <scope>NUCLEOTIDE SEQUENCE [LARGE SCALE GENOMIC DNA]</scope>
    <source>
        <strain>CT_02021853</strain>
    </source>
</reference>
<name>NAPA_SALDC</name>
<keyword id="KW-0004">4Fe-4S</keyword>
<keyword id="KW-0249">Electron transport</keyword>
<keyword id="KW-0408">Iron</keyword>
<keyword id="KW-0411">Iron-sulfur</keyword>
<keyword id="KW-0479">Metal-binding</keyword>
<keyword id="KW-0500">Molybdenum</keyword>
<keyword id="KW-0534">Nitrate assimilation</keyword>
<keyword id="KW-0560">Oxidoreductase</keyword>
<keyword id="KW-0574">Periplasm</keyword>
<keyword id="KW-0732">Signal</keyword>
<keyword id="KW-0813">Transport</keyword>
<dbReference type="EC" id="1.9.6.1" evidence="1"/>
<dbReference type="EMBL" id="CP001144">
    <property type="protein sequence ID" value="ACH76253.1"/>
    <property type="molecule type" value="Genomic_DNA"/>
</dbReference>
<dbReference type="RefSeq" id="WP_000778101.1">
    <property type="nucleotide sequence ID" value="NC_011205.1"/>
</dbReference>
<dbReference type="SMR" id="B5FNQ2"/>
<dbReference type="KEGG" id="sed:SeD_A2602"/>
<dbReference type="HOGENOM" id="CLU_000422_13_4_6"/>
<dbReference type="Proteomes" id="UP000008322">
    <property type="component" value="Chromosome"/>
</dbReference>
<dbReference type="GO" id="GO:0016020">
    <property type="term" value="C:membrane"/>
    <property type="evidence" value="ECO:0007669"/>
    <property type="project" value="TreeGrafter"/>
</dbReference>
<dbReference type="GO" id="GO:0009325">
    <property type="term" value="C:nitrate reductase complex"/>
    <property type="evidence" value="ECO:0007669"/>
    <property type="project" value="TreeGrafter"/>
</dbReference>
<dbReference type="GO" id="GO:0042597">
    <property type="term" value="C:periplasmic space"/>
    <property type="evidence" value="ECO:0007669"/>
    <property type="project" value="UniProtKB-SubCell"/>
</dbReference>
<dbReference type="GO" id="GO:0051539">
    <property type="term" value="F:4 iron, 4 sulfur cluster binding"/>
    <property type="evidence" value="ECO:0007669"/>
    <property type="project" value="UniProtKB-KW"/>
</dbReference>
<dbReference type="GO" id="GO:0009055">
    <property type="term" value="F:electron transfer activity"/>
    <property type="evidence" value="ECO:0007669"/>
    <property type="project" value="UniProtKB-UniRule"/>
</dbReference>
<dbReference type="GO" id="GO:0005506">
    <property type="term" value="F:iron ion binding"/>
    <property type="evidence" value="ECO:0007669"/>
    <property type="project" value="UniProtKB-UniRule"/>
</dbReference>
<dbReference type="GO" id="GO:0030151">
    <property type="term" value="F:molybdenum ion binding"/>
    <property type="evidence" value="ECO:0007669"/>
    <property type="project" value="InterPro"/>
</dbReference>
<dbReference type="GO" id="GO:0043546">
    <property type="term" value="F:molybdopterin cofactor binding"/>
    <property type="evidence" value="ECO:0007669"/>
    <property type="project" value="InterPro"/>
</dbReference>
<dbReference type="GO" id="GO:0050140">
    <property type="term" value="F:nitrate reductase (cytochrome) activity"/>
    <property type="evidence" value="ECO:0007669"/>
    <property type="project" value="UniProtKB-EC"/>
</dbReference>
<dbReference type="GO" id="GO:0045333">
    <property type="term" value="P:cellular respiration"/>
    <property type="evidence" value="ECO:0007669"/>
    <property type="project" value="UniProtKB-ARBA"/>
</dbReference>
<dbReference type="GO" id="GO:0006777">
    <property type="term" value="P:Mo-molybdopterin cofactor biosynthetic process"/>
    <property type="evidence" value="ECO:0007669"/>
    <property type="project" value="UniProtKB-UniRule"/>
</dbReference>
<dbReference type="GO" id="GO:0042128">
    <property type="term" value="P:nitrate assimilation"/>
    <property type="evidence" value="ECO:0007669"/>
    <property type="project" value="UniProtKB-UniRule"/>
</dbReference>
<dbReference type="CDD" id="cd02791">
    <property type="entry name" value="MopB_CT_Nitrate-R-NapA-like"/>
    <property type="match status" value="1"/>
</dbReference>
<dbReference type="CDD" id="cd02754">
    <property type="entry name" value="MopB_Nitrate-R-NapA-like"/>
    <property type="match status" value="1"/>
</dbReference>
<dbReference type="FunFam" id="2.40.40.20:FF:000005">
    <property type="entry name" value="Periplasmic nitrate reductase"/>
    <property type="match status" value="1"/>
</dbReference>
<dbReference type="FunFam" id="3.40.228.10:FF:000001">
    <property type="entry name" value="Periplasmic nitrate reductase"/>
    <property type="match status" value="1"/>
</dbReference>
<dbReference type="Gene3D" id="2.40.40.20">
    <property type="match status" value="1"/>
</dbReference>
<dbReference type="Gene3D" id="3.30.200.210">
    <property type="match status" value="1"/>
</dbReference>
<dbReference type="Gene3D" id="3.40.50.740">
    <property type="match status" value="1"/>
</dbReference>
<dbReference type="Gene3D" id="3.40.228.10">
    <property type="entry name" value="Dimethylsulfoxide Reductase, domain 2"/>
    <property type="match status" value="1"/>
</dbReference>
<dbReference type="HAMAP" id="MF_01630">
    <property type="entry name" value="Nitrate_reduct_NapA"/>
    <property type="match status" value="1"/>
</dbReference>
<dbReference type="InterPro" id="IPR009010">
    <property type="entry name" value="Asp_de-COase-like_dom_sf"/>
</dbReference>
<dbReference type="InterPro" id="IPR041957">
    <property type="entry name" value="CT_Nitrate-R-NapA-like"/>
</dbReference>
<dbReference type="InterPro" id="IPR006657">
    <property type="entry name" value="MoPterin_dinucl-bd_dom"/>
</dbReference>
<dbReference type="InterPro" id="IPR006656">
    <property type="entry name" value="Mopterin_OxRdtase"/>
</dbReference>
<dbReference type="InterPro" id="IPR006963">
    <property type="entry name" value="Mopterin_OxRdtase_4Fe-4S_dom"/>
</dbReference>
<dbReference type="InterPro" id="IPR027467">
    <property type="entry name" value="MopterinOxRdtase_cofactor_BS"/>
</dbReference>
<dbReference type="InterPro" id="IPR010051">
    <property type="entry name" value="Periplasm_NO3_reductase_lsu"/>
</dbReference>
<dbReference type="InterPro" id="IPR050123">
    <property type="entry name" value="Prok_molybdopt-oxidoreductase"/>
</dbReference>
<dbReference type="InterPro" id="IPR006311">
    <property type="entry name" value="TAT_signal"/>
</dbReference>
<dbReference type="InterPro" id="IPR019546">
    <property type="entry name" value="TAT_signal_bac_arc"/>
</dbReference>
<dbReference type="NCBIfam" id="TIGR01706">
    <property type="entry name" value="NAPA"/>
    <property type="match status" value="1"/>
</dbReference>
<dbReference type="NCBIfam" id="NF010055">
    <property type="entry name" value="PRK13532.1"/>
    <property type="match status" value="1"/>
</dbReference>
<dbReference type="NCBIfam" id="TIGR01409">
    <property type="entry name" value="TAT_signal_seq"/>
    <property type="match status" value="1"/>
</dbReference>
<dbReference type="PANTHER" id="PTHR43105:SF11">
    <property type="entry name" value="PERIPLASMIC NITRATE REDUCTASE"/>
    <property type="match status" value="1"/>
</dbReference>
<dbReference type="PANTHER" id="PTHR43105">
    <property type="entry name" value="RESPIRATORY NITRATE REDUCTASE"/>
    <property type="match status" value="1"/>
</dbReference>
<dbReference type="Pfam" id="PF04879">
    <property type="entry name" value="Molybdop_Fe4S4"/>
    <property type="match status" value="1"/>
</dbReference>
<dbReference type="Pfam" id="PF00384">
    <property type="entry name" value="Molybdopterin"/>
    <property type="match status" value="1"/>
</dbReference>
<dbReference type="Pfam" id="PF01568">
    <property type="entry name" value="Molydop_binding"/>
    <property type="match status" value="1"/>
</dbReference>
<dbReference type="SMART" id="SM00926">
    <property type="entry name" value="Molybdop_Fe4S4"/>
    <property type="match status" value="1"/>
</dbReference>
<dbReference type="SUPFAM" id="SSF50692">
    <property type="entry name" value="ADC-like"/>
    <property type="match status" value="1"/>
</dbReference>
<dbReference type="SUPFAM" id="SSF53706">
    <property type="entry name" value="Formate dehydrogenase/DMSO reductase, domains 1-3"/>
    <property type="match status" value="1"/>
</dbReference>
<dbReference type="PROSITE" id="PS51669">
    <property type="entry name" value="4FE4S_MOW_BIS_MGD"/>
    <property type="match status" value="1"/>
</dbReference>
<dbReference type="PROSITE" id="PS00551">
    <property type="entry name" value="MOLYBDOPTERIN_PROK_1"/>
    <property type="match status" value="1"/>
</dbReference>
<dbReference type="PROSITE" id="PS51318">
    <property type="entry name" value="TAT"/>
    <property type="match status" value="1"/>
</dbReference>
<proteinExistence type="inferred from homology"/>
<sequence length="828" mass="92890">MKLSRRSFMKANAVAAAAAAAGLSVPGVARAVVGQQEAIKWDKAPCRFCGTGCGVLVGTQQGRVVACQGDPDAPVNRGLNCIKGYFLPKIMYGKDRLTQPMLRMKDGSYHKDGEFTPVSWEQAFDVMEEKFKTSLKEKGPEAIGMFGSGQWTIWEGYAAAKLFKAGFRSNNIDPNARHCMASAVVGFMRTFGMDEPMGCYDDIEQADAFVLWGSNMAEMHPILWSRITNRRLSDPNVKVAVLSTFQHRSFELADNGIVFTPQSDLVILNYIANYIIQNNAVNQDFFTKHVNLRKGATDIGYGLRPTHPLEKAAKNPGSDASEPMSFDEYKAFVAEYTLDKTAEMTGVPKDQLEQLAQLYADPNKRVISYWTMGFNQHTRGVWANNLVYNLHLLTGKISQPGCGPFSLTGQPSACGTAREVGTFSHRLPADMVVTNEKHRDICEKHWQIPAGTIPAKVGLHAVAQDRALKDGKLNVYWVMCNNNMQAGPNINEDRMPGWRDPRNFIIVSDPYPTVSALSADLILPTAMWVEKEGAYGNAERRTQFWRQQIKAPGEAKSDLWQLVQFSRRFKTEEVWPEALLSQKPELRGKTLYDVLFATPAVSKFPLSELKEDQLNDESRELGFYLQKGLFEEYAWFGRGHGHDLAPFDDYHNARGLRWPVVEGKETQWRYSEGNDPYVKAGEGYKFYGKPDGKAVIFALPFEPAAESPDNEYDLWLSTGRVLEHWHTGSMTRRVPELHRAFPEAVVFIHPLDAKARDLRRGDKVKVSSRRGEVISIVETRGRNRPPQGLVYMPFFDAAQLVNNLTLDATDPLSKETDFKKCAVKLAKV</sequence>
<comment type="function">
    <text evidence="1">Catalytic subunit of the periplasmic nitrate reductase complex NapAB. Receives electrons from NapB and catalyzes the reduction of nitrate to nitrite.</text>
</comment>
<comment type="catalytic activity">
    <reaction evidence="1">
        <text>2 Fe(II)-[cytochrome] + nitrate + 2 H(+) = 2 Fe(III)-[cytochrome] + nitrite + H2O</text>
        <dbReference type="Rhea" id="RHEA:12909"/>
        <dbReference type="Rhea" id="RHEA-COMP:11777"/>
        <dbReference type="Rhea" id="RHEA-COMP:11778"/>
        <dbReference type="ChEBI" id="CHEBI:15377"/>
        <dbReference type="ChEBI" id="CHEBI:15378"/>
        <dbReference type="ChEBI" id="CHEBI:16301"/>
        <dbReference type="ChEBI" id="CHEBI:17632"/>
        <dbReference type="ChEBI" id="CHEBI:29033"/>
        <dbReference type="ChEBI" id="CHEBI:29034"/>
        <dbReference type="EC" id="1.9.6.1"/>
    </reaction>
</comment>
<comment type="cofactor">
    <cofactor evidence="1">
        <name>[4Fe-4S] cluster</name>
        <dbReference type="ChEBI" id="CHEBI:49883"/>
    </cofactor>
    <text evidence="1">Binds 1 [4Fe-4S] cluster.</text>
</comment>
<comment type="cofactor">
    <cofactor evidence="1">
        <name>Mo-bis(molybdopterin guanine dinucleotide)</name>
        <dbReference type="ChEBI" id="CHEBI:60539"/>
    </cofactor>
    <text evidence="1">Binds 1 molybdenum-bis(molybdopterin guanine dinucleotide) (Mo-bis-MGD) cofactor per subunit.</text>
</comment>
<comment type="subunit">
    <text evidence="1">Component of the periplasmic nitrate reductase NapAB complex composed of NapA and NapB.</text>
</comment>
<comment type="subcellular location">
    <subcellularLocation>
        <location evidence="1">Periplasm</location>
    </subcellularLocation>
</comment>
<comment type="PTM">
    <text evidence="1">Predicted to be exported by the Tat system. The position of the signal peptide cleavage has not been experimentally proven.</text>
</comment>
<comment type="similarity">
    <text evidence="1">Belongs to the prokaryotic molybdopterin-containing oxidoreductase family. NasA/NapA/NarB subfamily.</text>
</comment>
<evidence type="ECO:0000255" key="1">
    <source>
        <dbReference type="HAMAP-Rule" id="MF_01630"/>
    </source>
</evidence>
<protein>
    <recommendedName>
        <fullName evidence="1">Periplasmic nitrate reductase</fullName>
        <ecNumber evidence="1">1.9.6.1</ecNumber>
    </recommendedName>
</protein>
<feature type="signal peptide" description="Tat-type signal" evidence="1">
    <location>
        <begin position="1"/>
        <end position="31"/>
    </location>
</feature>
<feature type="chain" id="PRO_1000186370" description="Periplasmic nitrate reductase" evidence="1">
    <location>
        <begin position="32"/>
        <end position="828"/>
    </location>
</feature>
<feature type="domain" description="4Fe-4S Mo/W bis-MGD-type" evidence="1">
    <location>
        <begin position="39"/>
        <end position="95"/>
    </location>
</feature>
<feature type="binding site" evidence="1">
    <location>
        <position position="46"/>
    </location>
    <ligand>
        <name>[4Fe-4S] cluster</name>
        <dbReference type="ChEBI" id="CHEBI:49883"/>
    </ligand>
</feature>
<feature type="binding site" evidence="1">
    <location>
        <position position="49"/>
    </location>
    <ligand>
        <name>[4Fe-4S] cluster</name>
        <dbReference type="ChEBI" id="CHEBI:49883"/>
    </ligand>
</feature>
<feature type="binding site" evidence="1">
    <location>
        <position position="53"/>
    </location>
    <ligand>
        <name>[4Fe-4S] cluster</name>
        <dbReference type="ChEBI" id="CHEBI:49883"/>
    </ligand>
</feature>
<feature type="binding site" evidence="1">
    <location>
        <position position="81"/>
    </location>
    <ligand>
        <name>[4Fe-4S] cluster</name>
        <dbReference type="ChEBI" id="CHEBI:49883"/>
    </ligand>
</feature>
<feature type="binding site" evidence="1">
    <location>
        <position position="83"/>
    </location>
    <ligand>
        <name>Mo-bis(molybdopterin guanine dinucleotide)</name>
        <dbReference type="ChEBI" id="CHEBI:60539"/>
    </ligand>
</feature>
<feature type="binding site" evidence="1">
    <location>
        <position position="150"/>
    </location>
    <ligand>
        <name>Mo-bis(molybdopterin guanine dinucleotide)</name>
        <dbReference type="ChEBI" id="CHEBI:60539"/>
    </ligand>
</feature>
<feature type="binding site" evidence="1">
    <location>
        <position position="175"/>
    </location>
    <ligand>
        <name>Mo-bis(molybdopterin guanine dinucleotide)</name>
        <dbReference type="ChEBI" id="CHEBI:60539"/>
    </ligand>
</feature>
<feature type="binding site" evidence="1">
    <location>
        <position position="179"/>
    </location>
    <ligand>
        <name>Mo-bis(molybdopterin guanine dinucleotide)</name>
        <dbReference type="ChEBI" id="CHEBI:60539"/>
    </ligand>
</feature>
<feature type="binding site" evidence="1">
    <location>
        <begin position="212"/>
        <end position="219"/>
    </location>
    <ligand>
        <name>Mo-bis(molybdopterin guanine dinucleotide)</name>
        <dbReference type="ChEBI" id="CHEBI:60539"/>
    </ligand>
</feature>
<feature type="binding site" evidence="1">
    <location>
        <begin position="243"/>
        <end position="247"/>
    </location>
    <ligand>
        <name>Mo-bis(molybdopterin guanine dinucleotide)</name>
        <dbReference type="ChEBI" id="CHEBI:60539"/>
    </ligand>
</feature>
<feature type="binding site" evidence="1">
    <location>
        <begin position="262"/>
        <end position="264"/>
    </location>
    <ligand>
        <name>Mo-bis(molybdopterin guanine dinucleotide)</name>
        <dbReference type="ChEBI" id="CHEBI:60539"/>
    </ligand>
</feature>
<feature type="binding site" evidence="1">
    <location>
        <position position="372"/>
    </location>
    <ligand>
        <name>Mo-bis(molybdopterin guanine dinucleotide)</name>
        <dbReference type="ChEBI" id="CHEBI:60539"/>
    </ligand>
</feature>
<feature type="binding site" evidence="1">
    <location>
        <position position="376"/>
    </location>
    <ligand>
        <name>Mo-bis(molybdopterin guanine dinucleotide)</name>
        <dbReference type="ChEBI" id="CHEBI:60539"/>
    </ligand>
</feature>
<feature type="binding site" evidence="1">
    <location>
        <position position="482"/>
    </location>
    <ligand>
        <name>Mo-bis(molybdopterin guanine dinucleotide)</name>
        <dbReference type="ChEBI" id="CHEBI:60539"/>
    </ligand>
</feature>
<feature type="binding site" evidence="1">
    <location>
        <begin position="508"/>
        <end position="509"/>
    </location>
    <ligand>
        <name>Mo-bis(molybdopterin guanine dinucleotide)</name>
        <dbReference type="ChEBI" id="CHEBI:60539"/>
    </ligand>
</feature>
<feature type="binding site" evidence="1">
    <location>
        <position position="531"/>
    </location>
    <ligand>
        <name>Mo-bis(molybdopterin guanine dinucleotide)</name>
        <dbReference type="ChEBI" id="CHEBI:60539"/>
    </ligand>
</feature>
<feature type="binding site" evidence="1">
    <location>
        <position position="558"/>
    </location>
    <ligand>
        <name>Mo-bis(molybdopterin guanine dinucleotide)</name>
        <dbReference type="ChEBI" id="CHEBI:60539"/>
    </ligand>
</feature>
<feature type="binding site" evidence="1">
    <location>
        <begin position="718"/>
        <end position="727"/>
    </location>
    <ligand>
        <name>Mo-bis(molybdopterin guanine dinucleotide)</name>
        <dbReference type="ChEBI" id="CHEBI:60539"/>
    </ligand>
</feature>
<feature type="binding site" evidence="1">
    <location>
        <position position="794"/>
    </location>
    <ligand>
        <name>substrate</name>
    </ligand>
</feature>
<feature type="binding site" evidence="1">
    <location>
        <position position="802"/>
    </location>
    <ligand>
        <name>Mo-bis(molybdopterin guanine dinucleotide)</name>
        <dbReference type="ChEBI" id="CHEBI:60539"/>
    </ligand>
</feature>
<feature type="binding site" evidence="1">
    <location>
        <position position="819"/>
    </location>
    <ligand>
        <name>Mo-bis(molybdopterin guanine dinucleotide)</name>
        <dbReference type="ChEBI" id="CHEBI:60539"/>
    </ligand>
</feature>